<evidence type="ECO:0000255" key="1">
    <source>
        <dbReference type="PROSITE-ProRule" id="PRU00114"/>
    </source>
</evidence>
<protein>
    <recommendedName>
        <fullName>Ig kappa chain V-II region MOPC 167</fullName>
    </recommendedName>
</protein>
<keyword id="KW-1064">Adaptive immunity</keyword>
<keyword id="KW-0903">Direct protein sequencing</keyword>
<keyword id="KW-1015">Disulfide bond</keyword>
<keyword id="KW-0391">Immunity</keyword>
<keyword id="KW-1280">Immunoglobulin</keyword>
<keyword id="KW-1185">Reference proteome</keyword>
<name>KV2A1_MOUSE</name>
<proteinExistence type="evidence at protein level"/>
<feature type="chain" id="PRO_0000059771" description="Ig kappa chain V-II region MOPC 167">
    <location>
        <begin position="1"/>
        <end position="112" status="greater than"/>
    </location>
</feature>
<feature type="region of interest" description="Framework-1">
    <location>
        <begin position="1"/>
        <end position="23"/>
    </location>
</feature>
<feature type="region of interest" description="Complementarity-determining-1">
    <location>
        <begin position="24"/>
        <end position="39"/>
    </location>
</feature>
<feature type="region of interest" description="Framework-2">
    <location>
        <begin position="40"/>
        <end position="54"/>
    </location>
</feature>
<feature type="region of interest" description="Complementarity-determining-2">
    <location>
        <begin position="55"/>
        <end position="61"/>
    </location>
</feature>
<feature type="region of interest" description="Framework-3">
    <location>
        <begin position="62"/>
        <end position="93"/>
    </location>
</feature>
<feature type="region of interest" description="Complementarity-determining-3">
    <location>
        <begin position="94"/>
        <end position="102"/>
    </location>
</feature>
<feature type="region of interest" description="Framework-4">
    <location>
        <begin position="103"/>
        <end position="112"/>
    </location>
</feature>
<feature type="disulfide bond" evidence="1">
    <location>
        <begin position="23"/>
        <end position="93"/>
    </location>
</feature>
<feature type="non-terminal residue">
    <location>
        <position position="112"/>
    </location>
</feature>
<dbReference type="PIR" id="A01908">
    <property type="entry name" value="KVMS16"/>
</dbReference>
<dbReference type="PIR" id="G30538">
    <property type="entry name" value="G30538"/>
</dbReference>
<dbReference type="SMR" id="P01626"/>
<dbReference type="MGI" id="MGI:3644894">
    <property type="gene designation" value="EG381776"/>
</dbReference>
<dbReference type="Proteomes" id="UP000000589">
    <property type="component" value="Unplaced"/>
</dbReference>
<dbReference type="GO" id="GO:0019814">
    <property type="term" value="C:immunoglobulin complex"/>
    <property type="evidence" value="ECO:0007669"/>
    <property type="project" value="UniProtKB-KW"/>
</dbReference>
<dbReference type="GO" id="GO:0002250">
    <property type="term" value="P:adaptive immune response"/>
    <property type="evidence" value="ECO:0007669"/>
    <property type="project" value="UniProtKB-KW"/>
</dbReference>
<dbReference type="FunFam" id="2.60.40.10:FF:002747">
    <property type="entry name" value="Ig kappa chain V region GOM"/>
    <property type="match status" value="1"/>
</dbReference>
<dbReference type="Gene3D" id="2.60.40.10">
    <property type="entry name" value="Immunoglobulins"/>
    <property type="match status" value="1"/>
</dbReference>
<dbReference type="InterPro" id="IPR007110">
    <property type="entry name" value="Ig-like_dom"/>
</dbReference>
<dbReference type="InterPro" id="IPR036179">
    <property type="entry name" value="Ig-like_dom_sf"/>
</dbReference>
<dbReference type="InterPro" id="IPR013783">
    <property type="entry name" value="Ig-like_fold"/>
</dbReference>
<dbReference type="InterPro" id="IPR003599">
    <property type="entry name" value="Ig_sub"/>
</dbReference>
<dbReference type="InterPro" id="IPR013106">
    <property type="entry name" value="Ig_V-set"/>
</dbReference>
<dbReference type="InterPro" id="IPR050150">
    <property type="entry name" value="IgV_Light_Chain"/>
</dbReference>
<dbReference type="PANTHER" id="PTHR23267">
    <property type="entry name" value="IMMUNOGLOBULIN LIGHT CHAIN"/>
    <property type="match status" value="1"/>
</dbReference>
<dbReference type="Pfam" id="PF07686">
    <property type="entry name" value="V-set"/>
    <property type="match status" value="1"/>
</dbReference>
<dbReference type="SMART" id="SM00409">
    <property type="entry name" value="IG"/>
    <property type="match status" value="1"/>
</dbReference>
<dbReference type="SMART" id="SM00406">
    <property type="entry name" value="IGv"/>
    <property type="match status" value="1"/>
</dbReference>
<dbReference type="SUPFAM" id="SSF48726">
    <property type="entry name" value="Immunoglobulin"/>
    <property type="match status" value="1"/>
</dbReference>
<dbReference type="PROSITE" id="PS50835">
    <property type="entry name" value="IG_LIKE"/>
    <property type="match status" value="1"/>
</dbReference>
<reference key="1">
    <citation type="journal article" date="1978" name="Biochemistry">
        <title>Kappa Chain variable region from M167, a phosphorylcholine binding myeloma protein.</title>
        <authorList>
            <person name="Rudikoff S."/>
            <person name="Potter M."/>
        </authorList>
    </citation>
    <scope>PROTEIN SEQUENCE</scope>
</reference>
<sequence length="112" mass="12349">DIVITQDELSNPVTSGESVSISCRSSKSLLYKDGKTYLNWFLQRPGQSPQLLISLMSTRASGVSDRFSGSGSRTDFTLEISRVKAEDVGVYYCQQLVEYPLTFGAGTKLELK</sequence>
<accession>P01626</accession>
<organism>
    <name type="scientific">Mus musculus</name>
    <name type="common">Mouse</name>
    <dbReference type="NCBI Taxonomy" id="10090"/>
    <lineage>
        <taxon>Eukaryota</taxon>
        <taxon>Metazoa</taxon>
        <taxon>Chordata</taxon>
        <taxon>Craniata</taxon>
        <taxon>Vertebrata</taxon>
        <taxon>Euteleostomi</taxon>
        <taxon>Mammalia</taxon>
        <taxon>Eutheria</taxon>
        <taxon>Euarchontoglires</taxon>
        <taxon>Glires</taxon>
        <taxon>Rodentia</taxon>
        <taxon>Myomorpha</taxon>
        <taxon>Muroidea</taxon>
        <taxon>Muridae</taxon>
        <taxon>Murinae</taxon>
        <taxon>Mus</taxon>
        <taxon>Mus</taxon>
    </lineage>
</organism>
<comment type="miscellaneous">
    <text>This chain was isolated from a myeloma protein that binds phosphorylcholine. The sequence of the V region of the heavy chain has also been determined.</text>
</comment>